<name>CUEDA_CONCL</name>
<evidence type="ECO:0000250" key="1"/>
<evidence type="ECO:0000255" key="2"/>
<evidence type="ECO:0000303" key="3">
    <source>
    </source>
</evidence>
<evidence type="ECO:0000305" key="4"/>
<evidence type="ECO:0000305" key="5">
    <source>
    </source>
</evidence>
<dbReference type="EMBL" id="GU289668">
    <property type="protein sequence ID" value="ADB28952.1"/>
    <property type="molecule type" value="mRNA"/>
</dbReference>
<dbReference type="SMR" id="D2Y100"/>
<dbReference type="ConoServer" id="3977">
    <property type="toxin name" value="Cal14.13a precursor"/>
</dbReference>
<dbReference type="GO" id="GO:0005576">
    <property type="term" value="C:extracellular region"/>
    <property type="evidence" value="ECO:0007669"/>
    <property type="project" value="UniProtKB-SubCell"/>
</dbReference>
<dbReference type="GO" id="GO:0099106">
    <property type="term" value="F:ion channel regulator activity"/>
    <property type="evidence" value="ECO:0007669"/>
    <property type="project" value="UniProtKB-KW"/>
</dbReference>
<dbReference type="GO" id="GO:0090729">
    <property type="term" value="F:toxin activity"/>
    <property type="evidence" value="ECO:0007669"/>
    <property type="project" value="UniProtKB-KW"/>
</dbReference>
<protein>
    <recommendedName>
        <fullName evidence="4">Conotoxin Cal14.13a</fullName>
    </recommendedName>
    <alternativeName>
        <fullName evidence="3">Conotoxin Cal14.1a</fullName>
    </alternativeName>
</protein>
<proteinExistence type="evidence at protein level"/>
<comment type="function">
    <text evidence="4">Probable neurotoxin with unknown target. Possibly targets ion channels.</text>
</comment>
<comment type="subcellular location">
    <subcellularLocation>
        <location evidence="5">Secreted</location>
    </subcellularLocation>
</comment>
<comment type="tissue specificity">
    <text evidence="5">Expressed by the venom duct.</text>
</comment>
<comment type="domain">
    <text evidence="4">The cysteine framework is XIV (C-C-C-C).</text>
</comment>
<comment type="PTM">
    <text evidence="1">Contains 2 disulfide bonds.</text>
</comment>
<keyword id="KW-0027">Amidation</keyword>
<keyword id="KW-1015">Disulfide bond</keyword>
<keyword id="KW-0872">Ion channel impairing toxin</keyword>
<keyword id="KW-0528">Neurotoxin</keyword>
<keyword id="KW-0964">Secreted</keyword>
<keyword id="KW-0732">Signal</keyword>
<keyword id="KW-0800">Toxin</keyword>
<sequence>MKLCVVIVLLMLAMPFNGGEASRFFNQHARSQRSGMKTRGIWCDPPCPKGETCRGGECSDEFNSDVGR</sequence>
<accession>D2Y100</accession>
<reference key="1">
    <citation type="journal article" date="2011" name="Toxicon">
        <title>Diversity of conotoxin types from Conus californicus reflects a diversity of prey types and a novel evolutionary history.</title>
        <authorList>
            <person name="Elliger C.A."/>
            <person name="Richmond T.A."/>
            <person name="Lebaric Z.N."/>
            <person name="Pierce N.T."/>
            <person name="Sweedler J.V."/>
            <person name="Gilly W.F."/>
        </authorList>
    </citation>
    <scope>NUCLEOTIDE SEQUENCE [MRNA]</scope>
    <scope>AMIDATION AT VAL-66</scope>
    <source>
        <tissue>Venom duct</tissue>
    </source>
</reference>
<feature type="signal peptide" evidence="2">
    <location>
        <begin position="1"/>
        <end position="21"/>
    </location>
</feature>
<feature type="propeptide" id="PRO_5000566273" evidence="5">
    <location>
        <begin position="22"/>
        <end position="38"/>
    </location>
</feature>
<feature type="peptide" id="PRO_5000566274" description="Conotoxin Cal14.13a" evidence="5">
    <location>
        <begin position="40"/>
        <end position="66"/>
    </location>
</feature>
<feature type="modified residue" description="Valine amide" evidence="5">
    <location>
        <position position="66"/>
    </location>
</feature>
<organism>
    <name type="scientific">Californiconus californicus</name>
    <name type="common">California cone</name>
    <name type="synonym">Conus californicus</name>
    <dbReference type="NCBI Taxonomy" id="1736779"/>
    <lineage>
        <taxon>Eukaryota</taxon>
        <taxon>Metazoa</taxon>
        <taxon>Spiralia</taxon>
        <taxon>Lophotrochozoa</taxon>
        <taxon>Mollusca</taxon>
        <taxon>Gastropoda</taxon>
        <taxon>Caenogastropoda</taxon>
        <taxon>Neogastropoda</taxon>
        <taxon>Conoidea</taxon>
        <taxon>Conidae</taxon>
        <taxon>Californiconus</taxon>
    </lineage>
</organism>